<accession>Q8M9W8</accession>
<organism>
    <name type="scientific">Chaetosphaeridium globosum</name>
    <name type="common">Charophycean green alga</name>
    <name type="synonym">Herposteiron globosum</name>
    <dbReference type="NCBI Taxonomy" id="96477"/>
    <lineage>
        <taxon>Eukaryota</taxon>
        <taxon>Viridiplantae</taxon>
        <taxon>Streptophyta</taxon>
        <taxon>Coleochaetophyceae</taxon>
        <taxon>Coleochaetales</taxon>
        <taxon>Chaetosphaeridiaceae</taxon>
        <taxon>Chaetosphaeridium</taxon>
    </lineage>
</organism>
<dbReference type="EMBL" id="AF494278">
    <property type="protein sequence ID" value="AAM96542.1"/>
    <property type="molecule type" value="Genomic_DNA"/>
</dbReference>
<dbReference type="RefSeq" id="NP_683821.1">
    <property type="nucleotide sequence ID" value="NC_004115.1"/>
</dbReference>
<dbReference type="SMR" id="Q8M9W8"/>
<dbReference type="GeneID" id="860698"/>
<dbReference type="GO" id="GO:0009535">
    <property type="term" value="C:chloroplast thylakoid membrane"/>
    <property type="evidence" value="ECO:0007669"/>
    <property type="project" value="UniProtKB-SubCell"/>
</dbReference>
<dbReference type="GO" id="GO:0009539">
    <property type="term" value="C:photosystem II reaction center"/>
    <property type="evidence" value="ECO:0007669"/>
    <property type="project" value="InterPro"/>
</dbReference>
<dbReference type="GO" id="GO:0009055">
    <property type="term" value="F:electron transfer activity"/>
    <property type="evidence" value="ECO:0007669"/>
    <property type="project" value="UniProtKB-UniRule"/>
</dbReference>
<dbReference type="GO" id="GO:0020037">
    <property type="term" value="F:heme binding"/>
    <property type="evidence" value="ECO:0007669"/>
    <property type="project" value="InterPro"/>
</dbReference>
<dbReference type="GO" id="GO:0005506">
    <property type="term" value="F:iron ion binding"/>
    <property type="evidence" value="ECO:0007669"/>
    <property type="project" value="UniProtKB-UniRule"/>
</dbReference>
<dbReference type="GO" id="GO:0009767">
    <property type="term" value="P:photosynthetic electron transport chain"/>
    <property type="evidence" value="ECO:0007669"/>
    <property type="project" value="InterPro"/>
</dbReference>
<dbReference type="Gene3D" id="1.20.5.860">
    <property type="entry name" value="Photosystem II cytochrome b559, alpha subunit"/>
    <property type="match status" value="1"/>
</dbReference>
<dbReference type="HAMAP" id="MF_00642">
    <property type="entry name" value="PSII_PsbE"/>
    <property type="match status" value="1"/>
</dbReference>
<dbReference type="InterPro" id="IPR006217">
    <property type="entry name" value="PSII_cyt_b559_asu"/>
</dbReference>
<dbReference type="InterPro" id="IPR037025">
    <property type="entry name" value="PSII_cyt_b559_asu_sf"/>
</dbReference>
<dbReference type="InterPro" id="IPR006216">
    <property type="entry name" value="PSII_cyt_b559_CS"/>
</dbReference>
<dbReference type="InterPro" id="IPR013081">
    <property type="entry name" value="PSII_cyt_b559_N"/>
</dbReference>
<dbReference type="InterPro" id="IPR013082">
    <property type="entry name" value="PSII_cytb559_asu_lum"/>
</dbReference>
<dbReference type="NCBIfam" id="TIGR01332">
    <property type="entry name" value="cyt_b559_alpha"/>
    <property type="match status" value="1"/>
</dbReference>
<dbReference type="PANTHER" id="PTHR33391">
    <property type="entry name" value="CYTOCHROME B559 SUBUNIT BETA-RELATED"/>
    <property type="match status" value="1"/>
</dbReference>
<dbReference type="PANTHER" id="PTHR33391:SF9">
    <property type="entry name" value="CYTOCHROME B559 SUBUNIT BETA-RELATED"/>
    <property type="match status" value="1"/>
</dbReference>
<dbReference type="Pfam" id="PF00283">
    <property type="entry name" value="Cytochrom_B559"/>
    <property type="match status" value="1"/>
</dbReference>
<dbReference type="Pfam" id="PF00284">
    <property type="entry name" value="Cytochrom_B559a"/>
    <property type="match status" value="1"/>
</dbReference>
<dbReference type="PIRSF" id="PIRSF000036">
    <property type="entry name" value="PsbE"/>
    <property type="match status" value="1"/>
</dbReference>
<dbReference type="SUPFAM" id="SSF161045">
    <property type="entry name" value="Cytochrome b559 subunits"/>
    <property type="match status" value="1"/>
</dbReference>
<dbReference type="PROSITE" id="PS00537">
    <property type="entry name" value="CYTOCHROME_B559"/>
    <property type="match status" value="1"/>
</dbReference>
<sequence length="83" mass="9382">MSGNTGERPFADIITSIRYWVIHSITIPSLFIAGWLFVSTGLAYDVFGTPRPNEYFTADRQEVPLITGRFNSLEQLNEITKSL</sequence>
<keyword id="KW-0150">Chloroplast</keyword>
<keyword id="KW-0249">Electron transport</keyword>
<keyword id="KW-0349">Heme</keyword>
<keyword id="KW-0408">Iron</keyword>
<keyword id="KW-0472">Membrane</keyword>
<keyword id="KW-0479">Metal-binding</keyword>
<keyword id="KW-0602">Photosynthesis</keyword>
<keyword id="KW-0604">Photosystem II</keyword>
<keyword id="KW-0934">Plastid</keyword>
<keyword id="KW-0793">Thylakoid</keyword>
<keyword id="KW-0812">Transmembrane</keyword>
<keyword id="KW-1133">Transmembrane helix</keyword>
<keyword id="KW-0813">Transport</keyword>
<name>PSBE_CHAGL</name>
<reference key="1">
    <citation type="journal article" date="2002" name="Proc. Natl. Acad. Sci. U.S.A.">
        <title>The chloroplast and mitochondrial genome sequences of the charophyte Chaetosphaeridium globosum: insights into the timing of the events that restructured organelle DNAs within the green algal lineage that led to land plants.</title>
        <authorList>
            <person name="Turmel M."/>
            <person name="Otis C."/>
            <person name="Lemieux C."/>
        </authorList>
    </citation>
    <scope>NUCLEOTIDE SEQUENCE [LARGE SCALE GENOMIC DNA]</scope>
    <source>
        <strain>M1311</strain>
    </source>
</reference>
<gene>
    <name evidence="1" type="primary">psbE</name>
</gene>
<evidence type="ECO:0000255" key="1">
    <source>
        <dbReference type="HAMAP-Rule" id="MF_00642"/>
    </source>
</evidence>
<proteinExistence type="inferred from homology"/>
<geneLocation type="chloroplast"/>
<comment type="function">
    <text evidence="1">This b-type cytochrome is tightly associated with the reaction center of photosystem II (PSII). PSII is a light-driven water:plastoquinone oxidoreductase that uses light energy to abstract electrons from H(2)O, generating O(2) and a proton gradient subsequently used for ATP formation. It consists of a core antenna complex that captures photons, and an electron transfer chain that converts photonic excitation into a charge separation.</text>
</comment>
<comment type="cofactor">
    <cofactor evidence="1">
        <name>heme b</name>
        <dbReference type="ChEBI" id="CHEBI:60344"/>
    </cofactor>
    <text evidence="1">With its partner (PsbF) binds heme. PSII binds additional chlorophylls, carotenoids and specific lipids.</text>
</comment>
<comment type="subunit">
    <text evidence="1">Heterodimer of an alpha subunit and a beta subunit. PSII is composed of 1 copy each of membrane proteins PsbA, PsbB, PsbC, PsbD, PsbE, PsbF, PsbH, PsbI, PsbJ, PsbK, PsbL, PsbM, PsbT, PsbX, PsbY, PsbZ, Psb30/Ycf12, at least 3 peripheral proteins of the oxygen-evolving complex and a large number of cofactors. It forms dimeric complexes.</text>
</comment>
<comment type="subcellular location">
    <subcellularLocation>
        <location evidence="1">Plastid</location>
        <location evidence="1">Chloroplast thylakoid membrane</location>
        <topology evidence="1">Single-pass membrane protein</topology>
    </subcellularLocation>
</comment>
<comment type="similarity">
    <text evidence="1">Belongs to the PsbE/PsbF family.</text>
</comment>
<feature type="chain" id="PRO_0000200302" description="Cytochrome b559 subunit alpha">
    <location>
        <begin position="1"/>
        <end position="83"/>
    </location>
</feature>
<feature type="transmembrane region" description="Helical" evidence="1">
    <location>
        <begin position="21"/>
        <end position="35"/>
    </location>
</feature>
<feature type="binding site" description="axial binding residue" evidence="1">
    <location>
        <position position="23"/>
    </location>
    <ligand>
        <name>heme</name>
        <dbReference type="ChEBI" id="CHEBI:30413"/>
        <note>ligand shared with beta subunit</note>
    </ligand>
    <ligandPart>
        <name>Fe</name>
        <dbReference type="ChEBI" id="CHEBI:18248"/>
    </ligandPart>
</feature>
<protein>
    <recommendedName>
        <fullName evidence="1">Cytochrome b559 subunit alpha</fullName>
    </recommendedName>
    <alternativeName>
        <fullName evidence="1">PSII reaction center subunit V</fullName>
    </alternativeName>
</protein>